<comment type="function">
    <text evidence="1">Poorly processive, error-prone DNA polymerase involved in untargeted mutagenesis. Copies undamaged DNA at stalled replication forks, which arise in vivo from mismatched or misaligned primer ends. These misaligned primers can be extended by PolIV. Exhibits no 3'-5' exonuclease (proofreading) activity. May be involved in translesional synthesis, in conjunction with the beta clamp from PolIII.</text>
</comment>
<comment type="catalytic activity">
    <reaction evidence="1">
        <text>DNA(n) + a 2'-deoxyribonucleoside 5'-triphosphate = DNA(n+1) + diphosphate</text>
        <dbReference type="Rhea" id="RHEA:22508"/>
        <dbReference type="Rhea" id="RHEA-COMP:17339"/>
        <dbReference type="Rhea" id="RHEA-COMP:17340"/>
        <dbReference type="ChEBI" id="CHEBI:33019"/>
        <dbReference type="ChEBI" id="CHEBI:61560"/>
        <dbReference type="ChEBI" id="CHEBI:173112"/>
        <dbReference type="EC" id="2.7.7.7"/>
    </reaction>
</comment>
<comment type="cofactor">
    <cofactor evidence="1">
        <name>Mg(2+)</name>
        <dbReference type="ChEBI" id="CHEBI:18420"/>
    </cofactor>
    <text evidence="1">Binds 2 magnesium ions per subunit.</text>
</comment>
<comment type="subunit">
    <text evidence="1">Monomer.</text>
</comment>
<comment type="subcellular location">
    <subcellularLocation>
        <location evidence="1">Cytoplasm</location>
    </subcellularLocation>
</comment>
<comment type="similarity">
    <text evidence="1">Belongs to the DNA polymerase type-Y family.</text>
</comment>
<evidence type="ECO:0000255" key="1">
    <source>
        <dbReference type="HAMAP-Rule" id="MF_01113"/>
    </source>
</evidence>
<dbReference type="EC" id="2.7.7.7" evidence="1"/>
<dbReference type="EMBL" id="CP000387">
    <property type="protein sequence ID" value="ABN43799.1"/>
    <property type="molecule type" value="Genomic_DNA"/>
</dbReference>
<dbReference type="RefSeq" id="WP_011836448.1">
    <property type="nucleotide sequence ID" value="NC_009009.1"/>
</dbReference>
<dbReference type="RefSeq" id="YP_001034349.1">
    <property type="nucleotide sequence ID" value="NC_009009.1"/>
</dbReference>
<dbReference type="SMR" id="A3CKU4"/>
<dbReference type="STRING" id="388919.SSA_0343"/>
<dbReference type="KEGG" id="ssa:SSA_0343"/>
<dbReference type="PATRIC" id="fig|388919.9.peg.332"/>
<dbReference type="eggNOG" id="COG0389">
    <property type="taxonomic scope" value="Bacteria"/>
</dbReference>
<dbReference type="HOGENOM" id="CLU_012348_1_2_9"/>
<dbReference type="OrthoDB" id="9808813at2"/>
<dbReference type="Proteomes" id="UP000002148">
    <property type="component" value="Chromosome"/>
</dbReference>
<dbReference type="GO" id="GO:0005829">
    <property type="term" value="C:cytosol"/>
    <property type="evidence" value="ECO:0007669"/>
    <property type="project" value="TreeGrafter"/>
</dbReference>
<dbReference type="GO" id="GO:0003684">
    <property type="term" value="F:damaged DNA binding"/>
    <property type="evidence" value="ECO:0007669"/>
    <property type="project" value="InterPro"/>
</dbReference>
<dbReference type="GO" id="GO:0003887">
    <property type="term" value="F:DNA-directed DNA polymerase activity"/>
    <property type="evidence" value="ECO:0007669"/>
    <property type="project" value="UniProtKB-UniRule"/>
</dbReference>
<dbReference type="GO" id="GO:0000287">
    <property type="term" value="F:magnesium ion binding"/>
    <property type="evidence" value="ECO:0007669"/>
    <property type="project" value="UniProtKB-UniRule"/>
</dbReference>
<dbReference type="GO" id="GO:0006261">
    <property type="term" value="P:DNA-templated DNA replication"/>
    <property type="evidence" value="ECO:0007669"/>
    <property type="project" value="UniProtKB-UniRule"/>
</dbReference>
<dbReference type="GO" id="GO:0042276">
    <property type="term" value="P:error-prone translesion synthesis"/>
    <property type="evidence" value="ECO:0007669"/>
    <property type="project" value="TreeGrafter"/>
</dbReference>
<dbReference type="GO" id="GO:0009432">
    <property type="term" value="P:SOS response"/>
    <property type="evidence" value="ECO:0007669"/>
    <property type="project" value="TreeGrafter"/>
</dbReference>
<dbReference type="CDD" id="cd03586">
    <property type="entry name" value="PolY_Pol_IV_kappa"/>
    <property type="match status" value="1"/>
</dbReference>
<dbReference type="FunFam" id="3.30.1490.100:FF:000004">
    <property type="entry name" value="DNA polymerase IV"/>
    <property type="match status" value="1"/>
</dbReference>
<dbReference type="FunFam" id="3.40.1170.60:FF:000001">
    <property type="entry name" value="DNA polymerase IV"/>
    <property type="match status" value="1"/>
</dbReference>
<dbReference type="Gene3D" id="3.30.70.270">
    <property type="match status" value="1"/>
</dbReference>
<dbReference type="Gene3D" id="3.40.1170.60">
    <property type="match status" value="1"/>
</dbReference>
<dbReference type="Gene3D" id="1.10.150.20">
    <property type="entry name" value="5' to 3' exonuclease, C-terminal subdomain"/>
    <property type="match status" value="1"/>
</dbReference>
<dbReference type="Gene3D" id="3.30.1490.100">
    <property type="entry name" value="DNA polymerase, Y-family, little finger domain"/>
    <property type="match status" value="1"/>
</dbReference>
<dbReference type="HAMAP" id="MF_01113">
    <property type="entry name" value="DNApol_IV"/>
    <property type="match status" value="1"/>
</dbReference>
<dbReference type="InterPro" id="IPR043502">
    <property type="entry name" value="DNA/RNA_pol_sf"/>
</dbReference>
<dbReference type="InterPro" id="IPR036775">
    <property type="entry name" value="DNA_pol_Y-fam_lit_finger_sf"/>
</dbReference>
<dbReference type="InterPro" id="IPR017961">
    <property type="entry name" value="DNA_pol_Y-fam_little_finger"/>
</dbReference>
<dbReference type="InterPro" id="IPR050116">
    <property type="entry name" value="DNA_polymerase-Y"/>
</dbReference>
<dbReference type="InterPro" id="IPR022880">
    <property type="entry name" value="DNApol_IV"/>
</dbReference>
<dbReference type="InterPro" id="IPR043128">
    <property type="entry name" value="Rev_trsase/Diguanyl_cyclase"/>
</dbReference>
<dbReference type="InterPro" id="IPR001126">
    <property type="entry name" value="UmuC"/>
</dbReference>
<dbReference type="NCBIfam" id="NF002677">
    <property type="entry name" value="PRK02406.1"/>
    <property type="match status" value="1"/>
</dbReference>
<dbReference type="NCBIfam" id="NF010731">
    <property type="entry name" value="PRK14133.1"/>
    <property type="match status" value="1"/>
</dbReference>
<dbReference type="PANTHER" id="PTHR11076:SF33">
    <property type="entry name" value="DNA POLYMERASE KAPPA"/>
    <property type="match status" value="1"/>
</dbReference>
<dbReference type="PANTHER" id="PTHR11076">
    <property type="entry name" value="DNA REPAIR POLYMERASE UMUC / TRANSFERASE FAMILY MEMBER"/>
    <property type="match status" value="1"/>
</dbReference>
<dbReference type="Pfam" id="PF00817">
    <property type="entry name" value="IMS"/>
    <property type="match status" value="1"/>
</dbReference>
<dbReference type="Pfam" id="PF11799">
    <property type="entry name" value="IMS_C"/>
    <property type="match status" value="1"/>
</dbReference>
<dbReference type="SUPFAM" id="SSF56672">
    <property type="entry name" value="DNA/RNA polymerases"/>
    <property type="match status" value="1"/>
</dbReference>
<dbReference type="SUPFAM" id="SSF100879">
    <property type="entry name" value="Lesion bypass DNA polymerase (Y-family), little finger domain"/>
    <property type="match status" value="1"/>
</dbReference>
<dbReference type="PROSITE" id="PS50173">
    <property type="entry name" value="UMUC"/>
    <property type="match status" value="1"/>
</dbReference>
<keyword id="KW-0963">Cytoplasm</keyword>
<keyword id="KW-0227">DNA damage</keyword>
<keyword id="KW-0234">DNA repair</keyword>
<keyword id="KW-0235">DNA replication</keyword>
<keyword id="KW-0238">DNA-binding</keyword>
<keyword id="KW-0239">DNA-directed DNA polymerase</keyword>
<keyword id="KW-0460">Magnesium</keyword>
<keyword id="KW-0479">Metal-binding</keyword>
<keyword id="KW-0515">Mutator protein</keyword>
<keyword id="KW-0548">Nucleotidyltransferase</keyword>
<keyword id="KW-1185">Reference proteome</keyword>
<keyword id="KW-0808">Transferase</keyword>
<proteinExistence type="inferred from homology"/>
<reference key="1">
    <citation type="journal article" date="2007" name="J. Bacteriol.">
        <title>Genome of the opportunistic pathogen Streptococcus sanguinis.</title>
        <authorList>
            <person name="Xu P."/>
            <person name="Alves J.M."/>
            <person name="Kitten T."/>
            <person name="Brown A."/>
            <person name="Chen Z."/>
            <person name="Ozaki L.S."/>
            <person name="Manque P."/>
            <person name="Ge X."/>
            <person name="Serrano M.G."/>
            <person name="Puiu D."/>
            <person name="Hendricks S."/>
            <person name="Wang Y."/>
            <person name="Chaplin M.D."/>
            <person name="Akan D."/>
            <person name="Paik S."/>
            <person name="Peterson D.L."/>
            <person name="Macrina F.L."/>
            <person name="Buck G.A."/>
        </authorList>
    </citation>
    <scope>NUCLEOTIDE SEQUENCE [LARGE SCALE GENOMIC DNA]</scope>
    <source>
        <strain>SK36</strain>
    </source>
</reference>
<accession>A3CKU4</accession>
<gene>
    <name evidence="1" type="primary">dinB</name>
    <name type="ordered locus">SSA_0343</name>
</gene>
<sequence length="354" mass="40030">MLIFPLINDTSRKIIHIDMDAFFASVEERDNPKLKGHPVIIGSDPRLTGGRGVVSTCNYEARKFGVHSAMSSKEAYERCPQGIFISGNYEKYQAVGLQIREIFKRYTDLIEPMSIDEAYLDVTENKLGIKSAVKIAKLIQHDIWNELQLTASAGVSYNKFLAKIASDYEKPHGLTVILPEEAEVSLAPMDIAKFHGVGKKSVEKLHEMGVYTGADLLKIPEMTLIDKFGRFGFDLYRKARGISNSPVKSNRIRKSIGKERTYAKLLYSEEDIKKELTLLAQKVENSLTKHDKKGRTIVLKIRYADFSTLTKRKSLNLATQDKEQIERTAHEIYDSLEEQPRGIRLLGLTVTGFE</sequence>
<name>DPO4_STRSV</name>
<feature type="chain" id="PRO_1000084961" description="DNA polymerase IV">
    <location>
        <begin position="1"/>
        <end position="354"/>
    </location>
</feature>
<feature type="domain" description="UmuC" evidence="1">
    <location>
        <begin position="14"/>
        <end position="198"/>
    </location>
</feature>
<feature type="active site" evidence="1">
    <location>
        <position position="117"/>
    </location>
</feature>
<feature type="binding site" evidence="1">
    <location>
        <position position="18"/>
    </location>
    <ligand>
        <name>Mg(2+)</name>
        <dbReference type="ChEBI" id="CHEBI:18420"/>
    </ligand>
</feature>
<feature type="binding site" evidence="1">
    <location>
        <position position="116"/>
    </location>
    <ligand>
        <name>Mg(2+)</name>
        <dbReference type="ChEBI" id="CHEBI:18420"/>
    </ligand>
</feature>
<feature type="site" description="Substrate discrimination" evidence="1">
    <location>
        <position position="23"/>
    </location>
</feature>
<protein>
    <recommendedName>
        <fullName evidence="1">DNA polymerase IV</fullName>
        <shortName evidence="1">Pol IV</shortName>
        <ecNumber evidence="1">2.7.7.7</ecNumber>
    </recommendedName>
</protein>
<organism>
    <name type="scientific">Streptococcus sanguinis (strain SK36)</name>
    <dbReference type="NCBI Taxonomy" id="388919"/>
    <lineage>
        <taxon>Bacteria</taxon>
        <taxon>Bacillati</taxon>
        <taxon>Bacillota</taxon>
        <taxon>Bacilli</taxon>
        <taxon>Lactobacillales</taxon>
        <taxon>Streptococcaceae</taxon>
        <taxon>Streptococcus</taxon>
    </lineage>
</organism>